<evidence type="ECO:0000250" key="1">
    <source>
        <dbReference type="UniProtKB" id="Q9ZP19"/>
    </source>
</evidence>
<evidence type="ECO:0000305" key="2"/>
<name>TYRO_STRAT</name>
<reference key="1">
    <citation type="journal article" date="1985" name="Gene">
        <title>The nucleotide sequence of the tyrosinase gene from Streptomyces antibioticus and characterization of the gene product.</title>
        <authorList>
            <person name="Bernan V."/>
            <person name="Filpula D."/>
            <person name="Herber W."/>
            <person name="Bibb M.J."/>
            <person name="Katz E."/>
        </authorList>
    </citation>
    <scope>NUCLEOTIDE SEQUENCE [GENOMIC DNA]</scope>
</reference>
<protein>
    <recommendedName>
        <fullName>Tyrosinase</fullName>
        <ecNumber>1.14.18.1</ecNumber>
    </recommendedName>
    <alternativeName>
        <fullName>Monophenol monooxygenase</fullName>
    </alternativeName>
</protein>
<comment type="function">
    <text>This is a copper-containing oxidase that functions in the formation of pigments such as melanins and other polyphenolic compounds.</text>
</comment>
<comment type="catalytic activity">
    <reaction>
        <text>2 L-dopa + O2 = 2 L-dopaquinone + 2 H2O</text>
        <dbReference type="Rhea" id="RHEA:34287"/>
        <dbReference type="ChEBI" id="CHEBI:15377"/>
        <dbReference type="ChEBI" id="CHEBI:15379"/>
        <dbReference type="ChEBI" id="CHEBI:57504"/>
        <dbReference type="ChEBI" id="CHEBI:57924"/>
        <dbReference type="EC" id="1.14.18.1"/>
    </reaction>
</comment>
<comment type="catalytic activity">
    <reaction>
        <text>L-tyrosine + O2 = L-dopaquinone + H2O</text>
        <dbReference type="Rhea" id="RHEA:18117"/>
        <dbReference type="ChEBI" id="CHEBI:15377"/>
        <dbReference type="ChEBI" id="CHEBI:15379"/>
        <dbReference type="ChEBI" id="CHEBI:57924"/>
        <dbReference type="ChEBI" id="CHEBI:58315"/>
        <dbReference type="EC" id="1.14.18.1"/>
    </reaction>
</comment>
<comment type="cofactor">
    <cofactor evidence="1">
        <name>Cu(2+)</name>
        <dbReference type="ChEBI" id="CHEBI:29036"/>
    </cofactor>
    <text evidence="1">Binds 2 copper ions per subunit.</text>
</comment>
<comment type="similarity">
    <text evidence="2">Belongs to the tyrosinase family.</text>
</comment>
<dbReference type="EC" id="1.14.18.1"/>
<dbReference type="EMBL" id="M11582">
    <property type="protein sequence ID" value="AAA88571.1"/>
    <property type="molecule type" value="Genomic_DNA"/>
</dbReference>
<dbReference type="PIR" id="B23971">
    <property type="entry name" value="B23971"/>
</dbReference>
<dbReference type="RefSeq" id="WP_030787646.1">
    <property type="nucleotide sequence ID" value="NZ_CM007717.1"/>
</dbReference>
<dbReference type="SMR" id="P07524"/>
<dbReference type="STRING" id="1890.AFM16_02910"/>
<dbReference type="BindingDB" id="P07524"/>
<dbReference type="ChEMBL" id="CHEMBL5465284"/>
<dbReference type="GeneID" id="93962080"/>
<dbReference type="BRENDA" id="1.14.18.1">
    <property type="organism ID" value="5974"/>
</dbReference>
<dbReference type="GO" id="GO:0046872">
    <property type="term" value="F:metal ion binding"/>
    <property type="evidence" value="ECO:0007669"/>
    <property type="project" value="UniProtKB-KW"/>
</dbReference>
<dbReference type="GO" id="GO:0004503">
    <property type="term" value="F:tyrosinase activity"/>
    <property type="evidence" value="ECO:0007669"/>
    <property type="project" value="UniProtKB-EC"/>
</dbReference>
<dbReference type="GO" id="GO:0042438">
    <property type="term" value="P:melanin biosynthetic process"/>
    <property type="evidence" value="ECO:0007669"/>
    <property type="project" value="UniProtKB-KW"/>
</dbReference>
<dbReference type="Gene3D" id="1.10.1280.10">
    <property type="entry name" value="Di-copper center containing domain from catechol oxidase"/>
    <property type="match status" value="1"/>
</dbReference>
<dbReference type="InterPro" id="IPR008922">
    <property type="entry name" value="Di-copper_centre_dom_sf"/>
</dbReference>
<dbReference type="InterPro" id="IPR050316">
    <property type="entry name" value="Tyrosinase/Hemocyanin"/>
</dbReference>
<dbReference type="InterPro" id="IPR002227">
    <property type="entry name" value="Tyrosinase_Cu-bd"/>
</dbReference>
<dbReference type="NCBIfam" id="NF047834">
    <property type="entry name" value="TyrosinaseMelC2"/>
    <property type="match status" value="1"/>
</dbReference>
<dbReference type="PANTHER" id="PTHR11474">
    <property type="entry name" value="TYROSINASE FAMILY MEMBER"/>
    <property type="match status" value="1"/>
</dbReference>
<dbReference type="PANTHER" id="PTHR11474:SF126">
    <property type="entry name" value="TYROSINASE-LIKE PROTEIN TYR-1-RELATED"/>
    <property type="match status" value="1"/>
</dbReference>
<dbReference type="Pfam" id="PF00264">
    <property type="entry name" value="Tyrosinase"/>
    <property type="match status" value="1"/>
</dbReference>
<dbReference type="PRINTS" id="PR00092">
    <property type="entry name" value="TYROSINASE"/>
</dbReference>
<dbReference type="SUPFAM" id="SSF48056">
    <property type="entry name" value="Di-copper centre-containing domain"/>
    <property type="match status" value="1"/>
</dbReference>
<dbReference type="PROSITE" id="PS00497">
    <property type="entry name" value="TYROSINASE_1"/>
    <property type="match status" value="1"/>
</dbReference>
<dbReference type="PROSITE" id="PS00498">
    <property type="entry name" value="TYROSINASE_2"/>
    <property type="match status" value="1"/>
</dbReference>
<sequence length="273" mass="30739">MTVRKNQASLTAEEKRRFVAALLELKRTGRYDAFVTTHNAFILGDTDNGERTGHRSPSFLPWHRRFLLEFERALQSVDASVALPYWDWSADRSTRSSLWAPDFLGGTGRSRDGQVMDGPFAASAGNWPINVRVDGRTFLRRALGAGVSELPTRAEVDSVLAMATYDMAPWNSGSDGFRNHLEGWRGVNLHNRVHVWVGGQMATGVSPNDPVFWLHHAYIDKLWAEWQRRHPSSPYLPGGGTPNVVDLNETMKPWNDTTPAALLDHTRHYTFDV</sequence>
<feature type="initiator methionine" description="Removed">
    <location>
        <position position="1"/>
    </location>
</feature>
<feature type="chain" id="PRO_0000186737" description="Tyrosinase">
    <location>
        <begin position="2"/>
        <end position="273"/>
    </location>
</feature>
<feature type="binding site" evidence="1">
    <location>
        <position position="38"/>
    </location>
    <ligand>
        <name>Cu cation</name>
        <dbReference type="ChEBI" id="CHEBI:23378"/>
        <label>A</label>
    </ligand>
</feature>
<feature type="binding site" evidence="1">
    <location>
        <position position="54"/>
    </location>
    <ligand>
        <name>Cu cation</name>
        <dbReference type="ChEBI" id="CHEBI:23378"/>
        <label>A</label>
    </ligand>
</feature>
<feature type="binding site" evidence="1">
    <location>
        <position position="63"/>
    </location>
    <ligand>
        <name>Cu cation</name>
        <dbReference type="ChEBI" id="CHEBI:23378"/>
        <label>A</label>
    </ligand>
</feature>
<feature type="binding site" evidence="1">
    <location>
        <position position="190"/>
    </location>
    <ligand>
        <name>Cu cation</name>
        <dbReference type="ChEBI" id="CHEBI:23378"/>
        <label>B</label>
    </ligand>
</feature>
<feature type="binding site" evidence="1">
    <location>
        <position position="194"/>
    </location>
    <ligand>
        <name>Cu cation</name>
        <dbReference type="ChEBI" id="CHEBI:23378"/>
        <label>B</label>
    </ligand>
</feature>
<feature type="binding site" evidence="1">
    <location>
        <position position="216"/>
    </location>
    <ligand>
        <name>Cu cation</name>
        <dbReference type="ChEBI" id="CHEBI:23378"/>
        <label>B</label>
    </ligand>
</feature>
<proteinExistence type="inferred from homology"/>
<gene>
    <name type="primary">melC2</name>
    <name type="synonym">mel</name>
</gene>
<keyword id="KW-0186">Copper</keyword>
<keyword id="KW-0470">Melanin biosynthesis</keyword>
<keyword id="KW-0479">Metal-binding</keyword>
<keyword id="KW-0503">Monooxygenase</keyword>
<keyword id="KW-0560">Oxidoreductase</keyword>
<accession>P07524</accession>
<organism>
    <name type="scientific">Streptomyces antibioticus</name>
    <dbReference type="NCBI Taxonomy" id="1890"/>
    <lineage>
        <taxon>Bacteria</taxon>
        <taxon>Bacillati</taxon>
        <taxon>Actinomycetota</taxon>
        <taxon>Actinomycetes</taxon>
        <taxon>Kitasatosporales</taxon>
        <taxon>Streptomycetaceae</taxon>
        <taxon>Streptomyces</taxon>
    </lineage>
</organism>